<sequence>MLQEPSAAFSLRRNSFRRRSPRSNVDDRGWNPLHIKARKGDLKSVKQLLDQGMDVNALAWGPKSKGVSALHLAAEGGHIEVMDLLLERGANIDAKTWGSCGWTPLHAAAKERKREAVKFLVENGAFLADDITDTRFNPPVHYCHGLEWAYEEMKKLNSESSSSSGGDTSSSSDN</sequence>
<keyword id="KW-0040">ANK repeat</keyword>
<keyword id="KW-0963">Cytoplasm</keyword>
<keyword id="KW-0496">Mitochondrion</keyword>
<keyword id="KW-0539">Nucleus</keyword>
<keyword id="KW-0597">Phosphoprotein</keyword>
<keyword id="KW-1185">Reference proteome</keyword>
<keyword id="KW-0677">Repeat</keyword>
<dbReference type="EMBL" id="AB006696">
    <property type="protein sequence ID" value="BAB10384.1"/>
    <property type="molecule type" value="Genomic_DNA"/>
</dbReference>
<dbReference type="EMBL" id="CP002688">
    <property type="protein sequence ID" value="AED97439.1"/>
    <property type="molecule type" value="Genomic_DNA"/>
</dbReference>
<dbReference type="EMBL" id="AY039615">
    <property type="protein sequence ID" value="AAK62670.1"/>
    <property type="molecule type" value="mRNA"/>
</dbReference>
<dbReference type="EMBL" id="AY078023">
    <property type="protein sequence ID" value="AAL77724.1"/>
    <property type="molecule type" value="mRNA"/>
</dbReference>
<dbReference type="RefSeq" id="NP_200931.1">
    <property type="nucleotide sequence ID" value="NM_125516.4"/>
</dbReference>
<dbReference type="SMR" id="Q9FNP4"/>
<dbReference type="DIP" id="DIP-60439N"/>
<dbReference type="FunCoup" id="Q9FNP4">
    <property type="interactions" value="1471"/>
</dbReference>
<dbReference type="IntAct" id="Q9FNP4">
    <property type="interactions" value="14"/>
</dbReference>
<dbReference type="STRING" id="3702.Q9FNP4"/>
<dbReference type="iPTMnet" id="Q9FNP4"/>
<dbReference type="PaxDb" id="3702-AT5G61230.1"/>
<dbReference type="EnsemblPlants" id="AT5G61230.1">
    <property type="protein sequence ID" value="AT5G61230.1"/>
    <property type="gene ID" value="AT5G61230"/>
</dbReference>
<dbReference type="GeneID" id="836244"/>
<dbReference type="Gramene" id="AT5G61230.1">
    <property type="protein sequence ID" value="AT5G61230.1"/>
    <property type="gene ID" value="AT5G61230"/>
</dbReference>
<dbReference type="KEGG" id="ath:AT5G61230"/>
<dbReference type="Araport" id="AT5G61230"/>
<dbReference type="TAIR" id="AT5G61230">
    <property type="gene designation" value="ANK6"/>
</dbReference>
<dbReference type="eggNOG" id="KOG0504">
    <property type="taxonomic scope" value="Eukaryota"/>
</dbReference>
<dbReference type="HOGENOM" id="CLU_000134_45_8_1"/>
<dbReference type="InParanoid" id="Q9FNP4"/>
<dbReference type="OMA" id="LPDDMYD"/>
<dbReference type="OrthoDB" id="194358at2759"/>
<dbReference type="PhylomeDB" id="Q9FNP4"/>
<dbReference type="PRO" id="PR:Q9FNP4"/>
<dbReference type="Proteomes" id="UP000006548">
    <property type="component" value="Chromosome 5"/>
</dbReference>
<dbReference type="ExpressionAtlas" id="Q9FNP4">
    <property type="expression patterns" value="baseline and differential"/>
</dbReference>
<dbReference type="GO" id="GO:0005737">
    <property type="term" value="C:cytoplasm"/>
    <property type="evidence" value="ECO:0000314"/>
    <property type="project" value="UniProtKB"/>
</dbReference>
<dbReference type="GO" id="GO:0005739">
    <property type="term" value="C:mitochondrion"/>
    <property type="evidence" value="ECO:0000314"/>
    <property type="project" value="UniProtKB"/>
</dbReference>
<dbReference type="GO" id="GO:0005634">
    <property type="term" value="C:nucleus"/>
    <property type="evidence" value="ECO:0000314"/>
    <property type="project" value="UniProtKB"/>
</dbReference>
<dbReference type="GO" id="GO:0010313">
    <property type="term" value="F:phytochrome binding"/>
    <property type="evidence" value="ECO:0000314"/>
    <property type="project" value="UniProtKB"/>
</dbReference>
<dbReference type="GO" id="GO:0009567">
    <property type="term" value="P:double fertilization forming a zygote and endosperm"/>
    <property type="evidence" value="ECO:0000315"/>
    <property type="project" value="TAIR"/>
</dbReference>
<dbReference type="GO" id="GO:0009553">
    <property type="term" value="P:embryo sac development"/>
    <property type="evidence" value="ECO:0000315"/>
    <property type="project" value="TAIR"/>
</dbReference>
<dbReference type="GO" id="GO:0080173">
    <property type="term" value="P:male-female gamete recognition during double fertilization forming a zygote and endosperm"/>
    <property type="evidence" value="ECO:0000315"/>
    <property type="project" value="TAIR"/>
</dbReference>
<dbReference type="GO" id="GO:0001933">
    <property type="term" value="P:negative regulation of protein phosphorylation"/>
    <property type="evidence" value="ECO:0000315"/>
    <property type="project" value="UniProtKB"/>
</dbReference>
<dbReference type="GO" id="GO:0031542">
    <property type="term" value="P:positive regulation of anthocyanin biosynthetic process"/>
    <property type="evidence" value="ECO:0000315"/>
    <property type="project" value="UniProtKB"/>
</dbReference>
<dbReference type="GO" id="GO:0010218">
    <property type="term" value="P:response to far red light"/>
    <property type="evidence" value="ECO:0000315"/>
    <property type="project" value="UniProtKB"/>
</dbReference>
<dbReference type="GO" id="GO:0009644">
    <property type="term" value="P:response to high light intensity"/>
    <property type="evidence" value="ECO:0000315"/>
    <property type="project" value="UniProtKB"/>
</dbReference>
<dbReference type="GO" id="GO:0009744">
    <property type="term" value="P:response to sucrose"/>
    <property type="evidence" value="ECO:0000315"/>
    <property type="project" value="UniProtKB"/>
</dbReference>
<dbReference type="FunFam" id="1.25.40.20:FF:000793">
    <property type="entry name" value="Ankyrin repeat family protein"/>
    <property type="match status" value="1"/>
</dbReference>
<dbReference type="Gene3D" id="1.25.40.20">
    <property type="entry name" value="Ankyrin repeat-containing domain"/>
    <property type="match status" value="2"/>
</dbReference>
<dbReference type="InterPro" id="IPR002110">
    <property type="entry name" value="Ankyrin_rpt"/>
</dbReference>
<dbReference type="InterPro" id="IPR036770">
    <property type="entry name" value="Ankyrin_rpt-contain_sf"/>
</dbReference>
<dbReference type="PANTHER" id="PTHR24171">
    <property type="entry name" value="ANKYRIN REPEAT DOMAIN-CONTAINING PROTEIN 39-RELATED"/>
    <property type="match status" value="1"/>
</dbReference>
<dbReference type="PANTHER" id="PTHR24171:SF8">
    <property type="entry name" value="BRCA1-ASSOCIATED RING DOMAIN PROTEIN 1"/>
    <property type="match status" value="1"/>
</dbReference>
<dbReference type="Pfam" id="PF00023">
    <property type="entry name" value="Ank"/>
    <property type="match status" value="1"/>
</dbReference>
<dbReference type="Pfam" id="PF12796">
    <property type="entry name" value="Ank_2"/>
    <property type="match status" value="1"/>
</dbReference>
<dbReference type="PRINTS" id="PR01415">
    <property type="entry name" value="ANKYRIN"/>
</dbReference>
<dbReference type="SMART" id="SM00248">
    <property type="entry name" value="ANK"/>
    <property type="match status" value="3"/>
</dbReference>
<dbReference type="SUPFAM" id="SSF48403">
    <property type="entry name" value="Ankyrin repeat"/>
    <property type="match status" value="1"/>
</dbReference>
<dbReference type="PROSITE" id="PS50297">
    <property type="entry name" value="ANK_REP_REGION"/>
    <property type="match status" value="1"/>
</dbReference>
<dbReference type="PROSITE" id="PS50088">
    <property type="entry name" value="ANK_REPEAT"/>
    <property type="match status" value="3"/>
</dbReference>
<name>PIA2_ARATH</name>
<accession>Q9FNP4</accession>
<protein>
    <recommendedName>
        <fullName evidence="8">Phytochrome-interacting ankyrin-repeat protein 2</fullName>
    </recommendedName>
    <component>
        <recommendedName>
            <fullName evidence="7">Protein ANKYRIN REPEAT 6, mitochondrial</fullName>
        </recommendedName>
    </component>
</protein>
<organism>
    <name type="scientific">Arabidopsis thaliana</name>
    <name type="common">Mouse-ear cress</name>
    <dbReference type="NCBI Taxonomy" id="3702"/>
    <lineage>
        <taxon>Eukaryota</taxon>
        <taxon>Viridiplantae</taxon>
        <taxon>Streptophyta</taxon>
        <taxon>Embryophyta</taxon>
        <taxon>Tracheophyta</taxon>
        <taxon>Spermatophyta</taxon>
        <taxon>Magnoliopsida</taxon>
        <taxon>eudicotyledons</taxon>
        <taxon>Gunneridae</taxon>
        <taxon>Pentapetalae</taxon>
        <taxon>rosids</taxon>
        <taxon>malvids</taxon>
        <taxon>Brassicales</taxon>
        <taxon>Brassicaceae</taxon>
        <taxon>Camelineae</taxon>
        <taxon>Arabidopsis</taxon>
    </lineage>
</organism>
<gene>
    <name evidence="8" type="primary">PIA2</name>
    <name evidence="7" type="synonym">ANK6</name>
    <name evidence="9" type="ordered locus">At5g61230</name>
    <name evidence="10" type="ORF">MAF19.22</name>
</gene>
<proteinExistence type="evidence at protein level"/>
<feature type="chain" id="PRO_0000439866" description="Phytochrome-interacting ankyrin-repeat protein 2">
    <location>
        <begin position="1"/>
        <end position="174"/>
    </location>
</feature>
<feature type="chain" id="PRO_0000439867" description="Protein ANKYRIN REPEAT 6, mitochondrial">
    <location>
        <begin position="23"/>
        <end position="174"/>
    </location>
</feature>
<feature type="repeat" description="ANK 1" evidence="1">
    <location>
        <begin position="28"/>
        <end position="57"/>
    </location>
</feature>
<feature type="repeat" description="ANK 2" evidence="1">
    <location>
        <begin position="65"/>
        <end position="94"/>
    </location>
</feature>
<feature type="repeat" description="ANK 3" evidence="1">
    <location>
        <begin position="100"/>
        <end position="129"/>
    </location>
</feature>
<feature type="region of interest" description="Disordered" evidence="2">
    <location>
        <begin position="1"/>
        <end position="29"/>
    </location>
</feature>
<feature type="compositionally biased region" description="Low complexity" evidence="2">
    <location>
        <begin position="1"/>
        <end position="13"/>
    </location>
</feature>
<feature type="modified residue" description="Phosphoserine" evidence="5">
    <location>
        <position position="15"/>
    </location>
</feature>
<feature type="mutagenesis site" description="Normal phosphorylation by PHYA, normal repression of PHYA-mediated PIF3 phosphorylation, and normal interaction with PHYA." evidence="5">
    <original>S</original>
    <variation>A</variation>
    <location>
        <position position="10"/>
    </location>
</feature>
<feature type="mutagenesis site" description="Abolished phosphorylation by PHYA. Impaired repression of PHYA-mediated PIF3 phosphorylation. Normal interaction with PHYA, but decreased interaction with PIF3. In plants lacking PIF3, reduced anthocyanin accumulation in seedlings grown under far-red light." evidence="5">
    <original>R</original>
    <variation>P</variation>
    <location>
        <position position="13"/>
    </location>
</feature>
<feature type="mutagenesis site" description="Impaired phosphorylation by PHYA. Normal repression of PHYA-mediated PIF3 phosphorylation, and normal interaction with PHYA." evidence="5">
    <original>S</original>
    <variation>A</variation>
    <location>
        <position position="15"/>
    </location>
</feature>
<feature type="mutagenesis site" description="Abolished phosphorylation by PHYA. Impaired repression of PHYA-mediated PIF3 phosphorylation. Normal interaction with PHYA, but decreased interaction with PIF3. In plants lacking PIF3, reduced anthocyanin accumulation in seedlings grown under far-red light." evidence="5">
    <original>F</original>
    <variation>P</variation>
    <location>
        <position position="16"/>
    </location>
</feature>
<comment type="function">
    <text evidence="3 4 5">Promotes anthocyanin accumulation through interaction with PHYA, especially in response to far-red light, high light and sucrose treatment, probably by triggering A3G2XYLT/UF3GT expression (PubMed:21395597, PubMed:27143545). Required for gametophytes development as well as male-female gamete recognition during fertilization, possibly by regulating mitochondrial gene expression (PubMed:21123745). Represses PHYA-mediated PIF3 phosphorylation (PubMed:27143545).</text>
</comment>
<comment type="subunit">
    <text evidence="3 4 5 6">Interacts with phytochrome A (PHYA), both in Pr and Pfr forms (PubMed:21395597, PubMed:27143545). Binds to PIF3, a repressor of photomorphogenesis in response to phytochrome-mediated light signaling; this interaction may trigger the repression of PHYA-mediated PIF3 phosphorylation (PubMed:27143545). Interacts with SIGE/SIG5 in mitochondrion (PubMed:21123745). Interacts with RPS9M (via C terminus) (PubMed:29312411).</text>
</comment>
<comment type="interaction">
    <interactant intactId="EBI-4435148">
        <id>Q9FNP4</id>
    </interactant>
    <interactant intactId="EBI-4446992">
        <id>O81313</id>
        <label>IND</label>
    </interactant>
    <organismsDiffer>false</organismsDiffer>
    <experiments>3</experiments>
</comment>
<comment type="interaction">
    <interactant intactId="EBI-4435148">
        <id>Q9FNP4</id>
    </interactant>
    <interactant intactId="EBI-25506855">
        <id>O23160</id>
        <label>MYB73</label>
    </interactant>
    <organismsDiffer>false</organismsDiffer>
    <experiments>3</experiments>
</comment>
<comment type="interaction">
    <interactant intactId="EBI-4435148">
        <id>Q9FNP4</id>
    </interactant>
    <interactant intactId="EBI-15343551">
        <id>Q9ZNX9</id>
        <label>SIGE</label>
    </interactant>
    <organismsDiffer>false</organismsDiffer>
    <experiments>4</experiments>
</comment>
<comment type="subcellular location">
    <molecule>Phytochrome-interacting ankyrin-repeat protein 2</molecule>
    <subcellularLocation>
        <location evidence="4">Cytoplasm</location>
    </subcellularLocation>
    <subcellularLocation>
        <location evidence="3 4">Nucleus</location>
    </subcellularLocation>
</comment>
<comment type="subcellular location">
    <molecule>Protein ANKYRIN REPEAT 6, mitochondrial</molecule>
    <subcellularLocation>
        <location evidence="3 6">Mitochondrion</location>
    </subcellularLocation>
</comment>
<comment type="tissue specificity">
    <text evidence="3 4">Mostly expressed in flowers, cotyledons, leaves and siliques, and, to a lower extent, in roots and stems (PubMed:21123745, PubMed:21395597). Also detected at low levels in seedlings grown in continuous dark or light conditions (PubMed:21395597). Expressed in male and female gametophytes (PubMed:21123745).</text>
</comment>
<comment type="developmental stage">
    <text evidence="3 4">Levels in leaves diminishes after transition from the vegetative to the reproductive phase. Accumulates strongly in developmental tissues (PubMed:21395597). Highly expressed in the male (e.g. pollen grains and pollen tubes) and female (e.g. synergids, egg cell and central cell) gametophytes before and during, but not after fertilization. In fertilized ovules, levels decrease rapidely to become undetectable at the stage before the first division of the endosperm (PubMed:21123745).</text>
</comment>
<comment type="PTM">
    <text evidence="4 5">Phosphorylated by PHYA.</text>
</comment>
<comment type="disruption phenotype">
    <text evidence="3 4">Embryonic lethality in homozygous mutant. In heterozygous plants, impaired male-female gamete recognition when pollen of ank6 mutant is placed on ank6 female gamete. Defects in female gametophyte development at the one-nucleate stage (PubMed:21123745). Abnormal hypocotyls length. Reduced accumulation of anthocyanin in seedlings grown under far-red light, in response to high light and after sucrose treatment, associated with lower levels of the UDP-flavonoid-3'-glucosyl-transferase (A3G2XYLT/UF3GT), a major enzyme in the anthocyanin biosynthesis processes (PubMed:21395597).</text>
</comment>
<evidence type="ECO:0000255" key="1"/>
<evidence type="ECO:0000256" key="2">
    <source>
        <dbReference type="SAM" id="MobiDB-lite"/>
    </source>
</evidence>
<evidence type="ECO:0000269" key="3">
    <source>
    </source>
</evidence>
<evidence type="ECO:0000269" key="4">
    <source>
    </source>
</evidence>
<evidence type="ECO:0000269" key="5">
    <source>
    </source>
</evidence>
<evidence type="ECO:0000269" key="6">
    <source>
    </source>
</evidence>
<evidence type="ECO:0000303" key="7">
    <source>
    </source>
</evidence>
<evidence type="ECO:0000303" key="8">
    <source>
    </source>
</evidence>
<evidence type="ECO:0000312" key="9">
    <source>
        <dbReference type="Araport" id="AT5G61230"/>
    </source>
</evidence>
<evidence type="ECO:0000312" key="10">
    <source>
        <dbReference type="EMBL" id="BAB10384.1"/>
    </source>
</evidence>
<reference key="1">
    <citation type="journal article" date="1997" name="DNA Res.">
        <title>Structural analysis of Arabidopsis thaliana chromosome 5. II. Sequence features of the regions of 1,044,062 bp covered by thirteen physically assigned P1 clones.</title>
        <authorList>
            <person name="Kotani H."/>
            <person name="Nakamura Y."/>
            <person name="Sato S."/>
            <person name="Kaneko T."/>
            <person name="Asamizu E."/>
            <person name="Miyajima N."/>
            <person name="Tabata S."/>
        </authorList>
    </citation>
    <scope>NUCLEOTIDE SEQUENCE [LARGE SCALE GENOMIC DNA]</scope>
    <source>
        <strain>cv. Columbia</strain>
    </source>
</reference>
<reference key="2">
    <citation type="journal article" date="2017" name="Plant J.">
        <title>Araport11: a complete reannotation of the Arabidopsis thaliana reference genome.</title>
        <authorList>
            <person name="Cheng C.Y."/>
            <person name="Krishnakumar V."/>
            <person name="Chan A.P."/>
            <person name="Thibaud-Nissen F."/>
            <person name="Schobel S."/>
            <person name="Town C.D."/>
        </authorList>
    </citation>
    <scope>GENOME REANNOTATION</scope>
    <source>
        <strain>cv. Columbia</strain>
    </source>
</reference>
<reference key="3">
    <citation type="journal article" date="2003" name="Science">
        <title>Empirical analysis of transcriptional activity in the Arabidopsis genome.</title>
        <authorList>
            <person name="Yamada K."/>
            <person name="Lim J."/>
            <person name="Dale J.M."/>
            <person name="Chen H."/>
            <person name="Shinn P."/>
            <person name="Palm C.J."/>
            <person name="Southwick A.M."/>
            <person name="Wu H.C."/>
            <person name="Kim C.J."/>
            <person name="Nguyen M."/>
            <person name="Pham P.K."/>
            <person name="Cheuk R.F."/>
            <person name="Karlin-Newmann G."/>
            <person name="Liu S.X."/>
            <person name="Lam B."/>
            <person name="Sakano H."/>
            <person name="Wu T."/>
            <person name="Yu G."/>
            <person name="Miranda M."/>
            <person name="Quach H.L."/>
            <person name="Tripp M."/>
            <person name="Chang C.H."/>
            <person name="Lee J.M."/>
            <person name="Toriumi M.J."/>
            <person name="Chan M.M."/>
            <person name="Tang C.C."/>
            <person name="Onodera C.S."/>
            <person name="Deng J.M."/>
            <person name="Akiyama K."/>
            <person name="Ansari Y."/>
            <person name="Arakawa T."/>
            <person name="Banh J."/>
            <person name="Banno F."/>
            <person name="Bowser L."/>
            <person name="Brooks S.Y."/>
            <person name="Carninci P."/>
            <person name="Chao Q."/>
            <person name="Choy N."/>
            <person name="Enju A."/>
            <person name="Goldsmith A.D."/>
            <person name="Gurjal M."/>
            <person name="Hansen N.F."/>
            <person name="Hayashizaki Y."/>
            <person name="Johnson-Hopson C."/>
            <person name="Hsuan V.W."/>
            <person name="Iida K."/>
            <person name="Karnes M."/>
            <person name="Khan S."/>
            <person name="Koesema E."/>
            <person name="Ishida J."/>
            <person name="Jiang P.X."/>
            <person name="Jones T."/>
            <person name="Kawai J."/>
            <person name="Kamiya A."/>
            <person name="Meyers C."/>
            <person name="Nakajima M."/>
            <person name="Narusaka M."/>
            <person name="Seki M."/>
            <person name="Sakurai T."/>
            <person name="Satou M."/>
            <person name="Tamse R."/>
            <person name="Vaysberg M."/>
            <person name="Wallender E.K."/>
            <person name="Wong C."/>
            <person name="Yamamura Y."/>
            <person name="Yuan S."/>
            <person name="Shinozaki K."/>
            <person name="Davis R.W."/>
            <person name="Theologis A."/>
            <person name="Ecker J.R."/>
        </authorList>
    </citation>
    <scope>NUCLEOTIDE SEQUENCE [LARGE SCALE MRNA]</scope>
    <source>
        <strain>cv. Columbia</strain>
    </source>
</reference>
<reference key="4">
    <citation type="journal article" date="2010" name="Proc. Natl. Acad. Sci. U.S.A.">
        <title>ANK6, a mitochondrial ankyrin repeat protein, is required for male-female gamete recognition in Arabidopsis thaliana.</title>
        <authorList>
            <person name="Yu F."/>
            <person name="Shi J."/>
            <person name="Zhou J."/>
            <person name="Gu J."/>
            <person name="Chen Q."/>
            <person name="Li J."/>
            <person name="Cheng W."/>
            <person name="Mao D."/>
            <person name="Tian L."/>
            <person name="Buchanan B.B."/>
            <person name="Li L."/>
            <person name="Chen L."/>
            <person name="Li D."/>
            <person name="Luan S."/>
        </authorList>
    </citation>
    <scope>FUNCTION</scope>
    <scope>DISRUPTION PHENOTYPE</scope>
    <scope>DEVELOPMENTAL STAGE</scope>
    <scope>SUBCELLULAR LOCATION</scope>
    <scope>INTERACTION WITH SIGE/SIG5</scope>
    <scope>TISSUE SPECIFICITY</scope>
    <source>
        <strain>cv. Columbia</strain>
    </source>
</reference>
<reference key="5">
    <citation type="journal article" date="2011" name="Physiol. Plantarum">
        <title>An ankyrin repeat protein is involved in anthocyanin biosynthesis in Arabidopsis.</title>
        <authorList>
            <person name="Yoo J."/>
            <person name="Shin D.H."/>
            <person name="Cho M.-H."/>
            <person name="Kim T.-L."/>
            <person name="Bhoo S.H."/>
            <person name="Hahn T.-R."/>
        </authorList>
    </citation>
    <scope>FUNCTION</scope>
    <scope>DISRUPTION PHENOTYPE</scope>
    <scope>PHOSPHORYLATION BY PHYA</scope>
    <scope>INTERACTION WITH PHYA</scope>
    <scope>TISSUE SPECIFICITY</scope>
    <scope>SUBCELLULAR LOCATION</scope>
    <scope>DEVELOPMENTAL STAGE</scope>
    <source>
        <strain>cv. Columbia</strain>
    </source>
</reference>
<reference key="6">
    <citation type="journal article" date="2016" name="J. Biochem.">
        <title>Phytochrome-interacting ankyrin repeat protein 2 modulates phytochrome A-mediated PIF3 phosphorylation in light signal transduction.</title>
        <authorList>
            <person name="Yoo J."/>
            <person name="Cho M.-H."/>
            <person name="Lee S.-W."/>
            <person name="Bhoo S.H."/>
        </authorList>
    </citation>
    <scope>FUNCTION</scope>
    <scope>MUTAGENESIS OF SER-10; ARG-13; SER-15 AND PHE-16</scope>
    <scope>INTERACTION WITH PIF3 AND PHYA</scope>
    <scope>PHOSPHORYLATION AT SER-15 BY PHYA</scope>
    <source>
        <strain>cv. Columbia</strain>
    </source>
</reference>
<reference key="7">
    <citation type="journal article" date="2017" name="Front. Plant Sci.">
        <title>RPS9M, a mitochondrial ribosomal protein, is essential for central cell maturation and endosperm development in Arabidopsis.</title>
        <authorList>
            <person name="Lu C."/>
            <person name="Yu F."/>
            <person name="Tian L."/>
            <person name="Huang X."/>
            <person name="Tan H."/>
            <person name="Xie Z."/>
            <person name="Hao X."/>
            <person name="Li D."/>
            <person name="Luan S."/>
            <person name="Chen L."/>
        </authorList>
    </citation>
    <scope>INTERACTION WITH RPS9M</scope>
    <scope>SUBCELLULAR LOCATION</scope>
</reference>